<gene>
    <name evidence="1" type="primary">rimM</name>
    <name type="ordered locus">SAV_2642</name>
</gene>
<reference key="1">
    <citation type="journal article" date="2001" name="Proc. Natl. Acad. Sci. U.S.A.">
        <title>Genome sequence of an industrial microorganism Streptomyces avermitilis: deducing the ability of producing secondary metabolites.</title>
        <authorList>
            <person name="Omura S."/>
            <person name="Ikeda H."/>
            <person name="Ishikawa J."/>
            <person name="Hanamoto A."/>
            <person name="Takahashi C."/>
            <person name="Shinose M."/>
            <person name="Takahashi Y."/>
            <person name="Horikawa H."/>
            <person name="Nakazawa H."/>
            <person name="Osonoe T."/>
            <person name="Kikuchi H."/>
            <person name="Shiba T."/>
            <person name="Sakaki Y."/>
            <person name="Hattori M."/>
        </authorList>
    </citation>
    <scope>NUCLEOTIDE SEQUENCE [LARGE SCALE GENOMIC DNA]</scope>
    <source>
        <strain>ATCC 31267 / DSM 46492 / JCM 5070 / NBRC 14893 / NCIMB 12804 / NRRL 8165 / MA-4680</strain>
    </source>
</reference>
<reference key="2">
    <citation type="journal article" date="2003" name="Nat. Biotechnol.">
        <title>Complete genome sequence and comparative analysis of the industrial microorganism Streptomyces avermitilis.</title>
        <authorList>
            <person name="Ikeda H."/>
            <person name="Ishikawa J."/>
            <person name="Hanamoto A."/>
            <person name="Shinose M."/>
            <person name="Kikuchi H."/>
            <person name="Shiba T."/>
            <person name="Sakaki Y."/>
            <person name="Hattori M."/>
            <person name="Omura S."/>
        </authorList>
    </citation>
    <scope>NUCLEOTIDE SEQUENCE [LARGE SCALE GENOMIC DNA]</scope>
    <source>
        <strain>ATCC 31267 / DSM 46492 / JCM 5070 / NBRC 14893 / NCIMB 12804 / NRRL 8165 / MA-4680</strain>
    </source>
</reference>
<accession>Q82JW2</accession>
<organism>
    <name type="scientific">Streptomyces avermitilis (strain ATCC 31267 / DSM 46492 / JCM 5070 / NBRC 14893 / NCIMB 12804 / NRRL 8165 / MA-4680)</name>
    <dbReference type="NCBI Taxonomy" id="227882"/>
    <lineage>
        <taxon>Bacteria</taxon>
        <taxon>Bacillati</taxon>
        <taxon>Actinomycetota</taxon>
        <taxon>Actinomycetes</taxon>
        <taxon>Kitasatosporales</taxon>
        <taxon>Streptomycetaceae</taxon>
        <taxon>Streptomyces</taxon>
    </lineage>
</organism>
<protein>
    <recommendedName>
        <fullName evidence="1">Ribosome maturation factor RimM</fullName>
    </recommendedName>
</protein>
<feature type="chain" id="PRO_0000163361" description="Ribosome maturation factor RimM">
    <location>
        <begin position="1"/>
        <end position="186"/>
    </location>
</feature>
<feature type="domain" description="PRC barrel" evidence="1">
    <location>
        <begin position="93"/>
        <end position="166"/>
    </location>
</feature>
<feature type="region of interest" description="Disordered" evidence="2">
    <location>
        <begin position="160"/>
        <end position="186"/>
    </location>
</feature>
<feature type="compositionally biased region" description="Acidic residues" evidence="2">
    <location>
        <begin position="174"/>
        <end position="186"/>
    </location>
</feature>
<comment type="function">
    <text evidence="1">An accessory protein needed during the final step in the assembly of 30S ribosomal subunit, possibly for assembly of the head region. Essential for efficient processing of 16S rRNA. May be needed both before and after RbfA during the maturation of 16S rRNA. It has affinity for free ribosomal 30S subunits but not for 70S ribosomes.</text>
</comment>
<comment type="subunit">
    <text evidence="1">Binds ribosomal protein uS19.</text>
</comment>
<comment type="subcellular location">
    <subcellularLocation>
        <location evidence="1">Cytoplasm</location>
    </subcellularLocation>
</comment>
<comment type="domain">
    <text evidence="1">The PRC barrel domain binds ribosomal protein uS19.</text>
</comment>
<comment type="similarity">
    <text evidence="1">Belongs to the RimM family.</text>
</comment>
<keyword id="KW-0143">Chaperone</keyword>
<keyword id="KW-0963">Cytoplasm</keyword>
<keyword id="KW-1185">Reference proteome</keyword>
<keyword id="KW-0690">Ribosome biogenesis</keyword>
<keyword id="KW-0698">rRNA processing</keyword>
<dbReference type="EMBL" id="BA000030">
    <property type="protein sequence ID" value="BAC70353.1"/>
    <property type="molecule type" value="Genomic_DNA"/>
</dbReference>
<dbReference type="RefSeq" id="WP_010984077.1">
    <property type="nucleotide sequence ID" value="NZ_JZJK01000071.1"/>
</dbReference>
<dbReference type="SMR" id="Q82JW2"/>
<dbReference type="GeneID" id="41539724"/>
<dbReference type="KEGG" id="sma:SAVERM_2642"/>
<dbReference type="eggNOG" id="COG0806">
    <property type="taxonomic scope" value="Bacteria"/>
</dbReference>
<dbReference type="HOGENOM" id="CLU_077636_0_0_11"/>
<dbReference type="OrthoDB" id="5381335at2"/>
<dbReference type="Proteomes" id="UP000000428">
    <property type="component" value="Chromosome"/>
</dbReference>
<dbReference type="GO" id="GO:0005737">
    <property type="term" value="C:cytoplasm"/>
    <property type="evidence" value="ECO:0007669"/>
    <property type="project" value="UniProtKB-SubCell"/>
</dbReference>
<dbReference type="GO" id="GO:0005840">
    <property type="term" value="C:ribosome"/>
    <property type="evidence" value="ECO:0007669"/>
    <property type="project" value="InterPro"/>
</dbReference>
<dbReference type="GO" id="GO:0043022">
    <property type="term" value="F:ribosome binding"/>
    <property type="evidence" value="ECO:0007669"/>
    <property type="project" value="InterPro"/>
</dbReference>
<dbReference type="GO" id="GO:0042274">
    <property type="term" value="P:ribosomal small subunit biogenesis"/>
    <property type="evidence" value="ECO:0007669"/>
    <property type="project" value="UniProtKB-UniRule"/>
</dbReference>
<dbReference type="GO" id="GO:0006364">
    <property type="term" value="P:rRNA processing"/>
    <property type="evidence" value="ECO:0007669"/>
    <property type="project" value="UniProtKB-UniRule"/>
</dbReference>
<dbReference type="Gene3D" id="2.30.30.240">
    <property type="entry name" value="PRC-barrel domain"/>
    <property type="match status" value="1"/>
</dbReference>
<dbReference type="Gene3D" id="2.40.30.60">
    <property type="entry name" value="RimM"/>
    <property type="match status" value="1"/>
</dbReference>
<dbReference type="HAMAP" id="MF_00014">
    <property type="entry name" value="Ribosome_mat_RimM"/>
    <property type="match status" value="1"/>
</dbReference>
<dbReference type="InterPro" id="IPR011033">
    <property type="entry name" value="PRC_barrel-like_sf"/>
</dbReference>
<dbReference type="InterPro" id="IPR056792">
    <property type="entry name" value="PRC_RimM"/>
</dbReference>
<dbReference type="InterPro" id="IPR011961">
    <property type="entry name" value="RimM"/>
</dbReference>
<dbReference type="InterPro" id="IPR002676">
    <property type="entry name" value="RimM_N"/>
</dbReference>
<dbReference type="InterPro" id="IPR036976">
    <property type="entry name" value="RimM_N_sf"/>
</dbReference>
<dbReference type="InterPro" id="IPR009000">
    <property type="entry name" value="Transl_B-barrel_sf"/>
</dbReference>
<dbReference type="NCBIfam" id="TIGR02273">
    <property type="entry name" value="16S_RimM"/>
    <property type="match status" value="1"/>
</dbReference>
<dbReference type="PANTHER" id="PTHR33692">
    <property type="entry name" value="RIBOSOME MATURATION FACTOR RIMM"/>
    <property type="match status" value="1"/>
</dbReference>
<dbReference type="PANTHER" id="PTHR33692:SF1">
    <property type="entry name" value="RIBOSOME MATURATION FACTOR RIMM"/>
    <property type="match status" value="1"/>
</dbReference>
<dbReference type="Pfam" id="PF24986">
    <property type="entry name" value="PRC_RimM"/>
    <property type="match status" value="1"/>
</dbReference>
<dbReference type="Pfam" id="PF01782">
    <property type="entry name" value="RimM"/>
    <property type="match status" value="1"/>
</dbReference>
<dbReference type="SUPFAM" id="SSF50346">
    <property type="entry name" value="PRC-barrel domain"/>
    <property type="match status" value="1"/>
</dbReference>
<dbReference type="SUPFAM" id="SSF50447">
    <property type="entry name" value="Translation proteins"/>
    <property type="match status" value="1"/>
</dbReference>
<evidence type="ECO:0000255" key="1">
    <source>
        <dbReference type="HAMAP-Rule" id="MF_00014"/>
    </source>
</evidence>
<evidence type="ECO:0000256" key="2">
    <source>
        <dbReference type="SAM" id="MobiDB-lite"/>
    </source>
</evidence>
<proteinExistence type="inferred from homology"/>
<name>RIMM_STRAW</name>
<sequence length="186" mass="20333">MQLVVARIGRAHGIKGEVTVEVRTDEPELRLGPGAVLATDPASVGPLTIETGRVHSGRLLLRFEGVRDRNGAEALRNTLLIAEVDPDEVPEDPDEYYDHQLMDLDVVTKDGTEVGRITEISHLPSQDLFVVERSDGSEVYIPFVEEIVVEIDLEEQRAVIDPPPGLIDDRAEVDSSDTEAATEADA</sequence>